<feature type="chain" id="PRO_0000303782" description="Exodeoxyribonuclease 7 large subunit">
    <location>
        <begin position="1"/>
        <end position="400"/>
    </location>
</feature>
<gene>
    <name evidence="1" type="primary">xseA</name>
    <name type="ordered locus">NT01CX_1980</name>
</gene>
<accession>A0Q0A1</accession>
<reference key="1">
    <citation type="journal article" date="2006" name="Nat. Biotechnol.">
        <title>The genome and transcriptomes of the anti-tumor agent Clostridium novyi-NT.</title>
        <authorList>
            <person name="Bettegowda C."/>
            <person name="Huang X."/>
            <person name="Lin J."/>
            <person name="Cheong I."/>
            <person name="Kohli M."/>
            <person name="Szabo S.A."/>
            <person name="Zhang X."/>
            <person name="Diaz L.A. Jr."/>
            <person name="Velculescu V.E."/>
            <person name="Parmigiani G."/>
            <person name="Kinzler K.W."/>
            <person name="Vogelstein B."/>
            <person name="Zhou S."/>
        </authorList>
    </citation>
    <scope>NUCLEOTIDE SEQUENCE [LARGE SCALE GENOMIC DNA]</scope>
    <source>
        <strain>NT</strain>
    </source>
</reference>
<proteinExistence type="inferred from homology"/>
<dbReference type="EC" id="3.1.11.6" evidence="1"/>
<dbReference type="EMBL" id="CP000382">
    <property type="protein sequence ID" value="ABK60373.1"/>
    <property type="molecule type" value="Genomic_DNA"/>
</dbReference>
<dbReference type="RefSeq" id="WP_011722056.1">
    <property type="nucleotide sequence ID" value="NC_008593.1"/>
</dbReference>
<dbReference type="SMR" id="A0Q0A1"/>
<dbReference type="STRING" id="386415.NT01CX_1980"/>
<dbReference type="KEGG" id="cno:NT01CX_1980"/>
<dbReference type="PATRIC" id="fig|386415.7.peg.1082"/>
<dbReference type="eggNOG" id="COG1570">
    <property type="taxonomic scope" value="Bacteria"/>
</dbReference>
<dbReference type="HOGENOM" id="CLU_023625_3_1_9"/>
<dbReference type="Proteomes" id="UP000008220">
    <property type="component" value="Chromosome"/>
</dbReference>
<dbReference type="GO" id="GO:0005737">
    <property type="term" value="C:cytoplasm"/>
    <property type="evidence" value="ECO:0007669"/>
    <property type="project" value="UniProtKB-SubCell"/>
</dbReference>
<dbReference type="GO" id="GO:0009318">
    <property type="term" value="C:exodeoxyribonuclease VII complex"/>
    <property type="evidence" value="ECO:0007669"/>
    <property type="project" value="InterPro"/>
</dbReference>
<dbReference type="GO" id="GO:0008855">
    <property type="term" value="F:exodeoxyribonuclease VII activity"/>
    <property type="evidence" value="ECO:0007669"/>
    <property type="project" value="UniProtKB-UniRule"/>
</dbReference>
<dbReference type="GO" id="GO:0003676">
    <property type="term" value="F:nucleic acid binding"/>
    <property type="evidence" value="ECO:0007669"/>
    <property type="project" value="InterPro"/>
</dbReference>
<dbReference type="GO" id="GO:0006308">
    <property type="term" value="P:DNA catabolic process"/>
    <property type="evidence" value="ECO:0007669"/>
    <property type="project" value="UniProtKB-UniRule"/>
</dbReference>
<dbReference type="CDD" id="cd04489">
    <property type="entry name" value="ExoVII_LU_OBF"/>
    <property type="match status" value="1"/>
</dbReference>
<dbReference type="HAMAP" id="MF_00378">
    <property type="entry name" value="Exonuc_7_L"/>
    <property type="match status" value="1"/>
</dbReference>
<dbReference type="InterPro" id="IPR003753">
    <property type="entry name" value="Exonuc_VII_L"/>
</dbReference>
<dbReference type="InterPro" id="IPR020579">
    <property type="entry name" value="Exonuc_VII_lsu_C"/>
</dbReference>
<dbReference type="InterPro" id="IPR025824">
    <property type="entry name" value="OB-fold_nuc-bd_dom"/>
</dbReference>
<dbReference type="NCBIfam" id="TIGR00237">
    <property type="entry name" value="xseA"/>
    <property type="match status" value="1"/>
</dbReference>
<dbReference type="PANTHER" id="PTHR30008">
    <property type="entry name" value="EXODEOXYRIBONUCLEASE 7 LARGE SUBUNIT"/>
    <property type="match status" value="1"/>
</dbReference>
<dbReference type="PANTHER" id="PTHR30008:SF0">
    <property type="entry name" value="EXODEOXYRIBONUCLEASE 7 LARGE SUBUNIT"/>
    <property type="match status" value="1"/>
</dbReference>
<dbReference type="Pfam" id="PF02601">
    <property type="entry name" value="Exonuc_VII_L"/>
    <property type="match status" value="2"/>
</dbReference>
<dbReference type="Pfam" id="PF13742">
    <property type="entry name" value="tRNA_anti_2"/>
    <property type="match status" value="1"/>
</dbReference>
<keyword id="KW-0963">Cytoplasm</keyword>
<keyword id="KW-0269">Exonuclease</keyword>
<keyword id="KW-0378">Hydrolase</keyword>
<keyword id="KW-0540">Nuclease</keyword>
<keyword id="KW-1185">Reference proteome</keyword>
<name>EX7L_CLONN</name>
<organism>
    <name type="scientific">Clostridium novyi (strain NT)</name>
    <dbReference type="NCBI Taxonomy" id="386415"/>
    <lineage>
        <taxon>Bacteria</taxon>
        <taxon>Bacillati</taxon>
        <taxon>Bacillota</taxon>
        <taxon>Clostridia</taxon>
        <taxon>Eubacteriales</taxon>
        <taxon>Clostridiaceae</taxon>
        <taxon>Clostridium</taxon>
    </lineage>
</organism>
<comment type="function">
    <text evidence="1">Bidirectionally degrades single-stranded DNA into large acid-insoluble oligonucleotides, which are then degraded further into small acid-soluble oligonucleotides.</text>
</comment>
<comment type="catalytic activity">
    <reaction evidence="1">
        <text>Exonucleolytic cleavage in either 5'- to 3'- or 3'- to 5'-direction to yield nucleoside 5'-phosphates.</text>
        <dbReference type="EC" id="3.1.11.6"/>
    </reaction>
</comment>
<comment type="subunit">
    <text evidence="1">Heterooligomer composed of large and small subunits.</text>
</comment>
<comment type="subcellular location">
    <subcellularLocation>
        <location evidence="1">Cytoplasm</location>
    </subcellularLocation>
</comment>
<comment type="similarity">
    <text evidence="1">Belongs to the XseA family.</text>
</comment>
<protein>
    <recommendedName>
        <fullName evidence="1">Exodeoxyribonuclease 7 large subunit</fullName>
        <ecNumber evidence="1">3.1.11.6</ecNumber>
    </recommendedName>
    <alternativeName>
        <fullName evidence="1">Exodeoxyribonuclease VII large subunit</fullName>
        <shortName evidence="1">Exonuclease VII large subunit</shortName>
    </alternativeName>
</protein>
<evidence type="ECO:0000255" key="1">
    <source>
        <dbReference type="HAMAP-Rule" id="MF_00378"/>
    </source>
</evidence>
<sequence length="400" mass="45405">MQMKTLGVSELNNYIKNVIDNDFILKNSKIKGEISNFKIHISGHIYFSLKDKNSKINCIMFRSYARGLKFIPENGDNVILKGRVSVYQKDGAYQFYCEDIEKEGVGDLFIAFEALKKKLYNEGLFDEYNKKEIPRFAKKIGVITSPTGAAVKDIINVSKRRNKGVELLIYPALVQGENAPKDLINGINYFSNRDDIDTIIIARGGGSIEELWAFNNEDLAYAIYNCNKPVISGVGHETDFTICDFVSDRRAPTPSAAAEIGVFNLNEVNTNIENYKNRLYNLIRNTINLKFKELNSLENAIKINSPMNTIANEYIRIDNLKNKLCHKIESKIEYEKIKLSKANSLLNAHNPLNILSRGFSIIKDEKNNVITTKEKIEENTCINITLKDGSTKVRISDVYK</sequence>